<proteinExistence type="inferred from homology"/>
<gene>
    <name evidence="1" type="primary">malK</name>
    <name type="ordered locus">ECP_4253</name>
</gene>
<keyword id="KW-0067">ATP-binding</keyword>
<keyword id="KW-0997">Cell inner membrane</keyword>
<keyword id="KW-1003">Cell membrane</keyword>
<keyword id="KW-0472">Membrane</keyword>
<keyword id="KW-0547">Nucleotide-binding</keyword>
<keyword id="KW-0762">Sugar transport</keyword>
<keyword id="KW-1278">Translocase</keyword>
<keyword id="KW-0813">Transport</keyword>
<comment type="function">
    <text evidence="1">Part of the ABC transporter complex MalEFGK involved in maltose/maltodextrin import. Responsible for energy coupling to the transport system.</text>
</comment>
<comment type="catalytic activity">
    <reaction evidence="1">
        <text>D-maltose(out) + ATP + H2O = D-maltose(in) + ADP + phosphate + H(+)</text>
        <dbReference type="Rhea" id="RHEA:22132"/>
        <dbReference type="ChEBI" id="CHEBI:15377"/>
        <dbReference type="ChEBI" id="CHEBI:15378"/>
        <dbReference type="ChEBI" id="CHEBI:17306"/>
        <dbReference type="ChEBI" id="CHEBI:30616"/>
        <dbReference type="ChEBI" id="CHEBI:43474"/>
        <dbReference type="ChEBI" id="CHEBI:456216"/>
        <dbReference type="EC" id="7.5.2.1"/>
    </reaction>
</comment>
<comment type="subunit">
    <text evidence="1">The complex is composed of two ATP-binding proteins (MalK), two transmembrane proteins (MalG and MalK) and a solute-binding protein (MalE).</text>
</comment>
<comment type="subcellular location">
    <subcellularLocation>
        <location evidence="1">Cell inner membrane</location>
        <topology evidence="1">Peripheral membrane protein</topology>
    </subcellularLocation>
</comment>
<comment type="similarity">
    <text evidence="1">Belongs to the ABC transporter superfamily. Maltooligosaccharide importer (TC 3.A.1.1.1) family.</text>
</comment>
<dbReference type="EC" id="7.5.2.1" evidence="1"/>
<dbReference type="EMBL" id="CP000247">
    <property type="protein sequence ID" value="ABG72203.1"/>
    <property type="molecule type" value="Genomic_DNA"/>
</dbReference>
<dbReference type="RefSeq" id="WP_001298288.1">
    <property type="nucleotide sequence ID" value="NC_008253.1"/>
</dbReference>
<dbReference type="SMR" id="Q0TA26"/>
<dbReference type="KEGG" id="ecp:ECP_4253"/>
<dbReference type="HOGENOM" id="CLU_000604_1_1_6"/>
<dbReference type="Proteomes" id="UP000009182">
    <property type="component" value="Chromosome"/>
</dbReference>
<dbReference type="GO" id="GO:0055052">
    <property type="term" value="C:ATP-binding cassette (ABC) transporter complex, substrate-binding subunit-containing"/>
    <property type="evidence" value="ECO:0007669"/>
    <property type="project" value="TreeGrafter"/>
</dbReference>
<dbReference type="GO" id="GO:1990060">
    <property type="term" value="C:maltose transport complex"/>
    <property type="evidence" value="ECO:0007669"/>
    <property type="project" value="TreeGrafter"/>
</dbReference>
<dbReference type="GO" id="GO:0015423">
    <property type="term" value="F:ABC-type maltose transporter activity"/>
    <property type="evidence" value="ECO:0007669"/>
    <property type="project" value="UniProtKB-EC"/>
</dbReference>
<dbReference type="GO" id="GO:0005524">
    <property type="term" value="F:ATP binding"/>
    <property type="evidence" value="ECO:0007669"/>
    <property type="project" value="UniProtKB-KW"/>
</dbReference>
<dbReference type="GO" id="GO:0016887">
    <property type="term" value="F:ATP hydrolysis activity"/>
    <property type="evidence" value="ECO:0007669"/>
    <property type="project" value="InterPro"/>
</dbReference>
<dbReference type="CDD" id="cd03301">
    <property type="entry name" value="ABC_MalK_N"/>
    <property type="match status" value="1"/>
</dbReference>
<dbReference type="FunFam" id="3.40.50.300:FF:000042">
    <property type="entry name" value="Maltose/maltodextrin ABC transporter, ATP-binding protein"/>
    <property type="match status" value="1"/>
</dbReference>
<dbReference type="FunFam" id="2.40.50.100:FF:000014">
    <property type="entry name" value="Maltose/maltodextrin import ATP-binding protein MalK"/>
    <property type="match status" value="1"/>
</dbReference>
<dbReference type="FunFam" id="2.40.50.140:FF:000070">
    <property type="entry name" value="Maltose/maltodextrin import ATP-binding protein MalK"/>
    <property type="match status" value="1"/>
</dbReference>
<dbReference type="Gene3D" id="2.40.50.100">
    <property type="match status" value="1"/>
</dbReference>
<dbReference type="Gene3D" id="2.40.50.140">
    <property type="entry name" value="Nucleic acid-binding proteins"/>
    <property type="match status" value="1"/>
</dbReference>
<dbReference type="Gene3D" id="3.40.50.300">
    <property type="entry name" value="P-loop containing nucleotide triphosphate hydrolases"/>
    <property type="match status" value="1"/>
</dbReference>
<dbReference type="InterPro" id="IPR003593">
    <property type="entry name" value="AAA+_ATPase"/>
</dbReference>
<dbReference type="InterPro" id="IPR003439">
    <property type="entry name" value="ABC_transporter-like_ATP-bd"/>
</dbReference>
<dbReference type="InterPro" id="IPR017871">
    <property type="entry name" value="ABC_transporter-like_CS"/>
</dbReference>
<dbReference type="InterPro" id="IPR015855">
    <property type="entry name" value="ABC_transpr_MalK-like"/>
</dbReference>
<dbReference type="InterPro" id="IPR047641">
    <property type="entry name" value="ABC_transpr_MalK/UgpC-like"/>
</dbReference>
<dbReference type="InterPro" id="IPR008995">
    <property type="entry name" value="Mo/tungstate-bd_C_term_dom"/>
</dbReference>
<dbReference type="InterPro" id="IPR012340">
    <property type="entry name" value="NA-bd_OB-fold"/>
</dbReference>
<dbReference type="InterPro" id="IPR027417">
    <property type="entry name" value="P-loop_NTPase"/>
</dbReference>
<dbReference type="InterPro" id="IPR013611">
    <property type="entry name" value="Transp-assoc_OB_typ2"/>
</dbReference>
<dbReference type="NCBIfam" id="NF008233">
    <property type="entry name" value="PRK11000.1"/>
    <property type="match status" value="1"/>
</dbReference>
<dbReference type="NCBIfam" id="NF008653">
    <property type="entry name" value="PRK11650.1"/>
    <property type="match status" value="1"/>
</dbReference>
<dbReference type="PANTHER" id="PTHR43875">
    <property type="entry name" value="MALTODEXTRIN IMPORT ATP-BINDING PROTEIN MSMX"/>
    <property type="match status" value="1"/>
</dbReference>
<dbReference type="PANTHER" id="PTHR43875:SF3">
    <property type="entry name" value="MALTOSE_MALTODEXTRIN IMPORT ATP-BINDING PROTEIN MALK"/>
    <property type="match status" value="1"/>
</dbReference>
<dbReference type="Pfam" id="PF00005">
    <property type="entry name" value="ABC_tran"/>
    <property type="match status" value="1"/>
</dbReference>
<dbReference type="Pfam" id="PF08402">
    <property type="entry name" value="TOBE_2"/>
    <property type="match status" value="1"/>
</dbReference>
<dbReference type="SMART" id="SM00382">
    <property type="entry name" value="AAA"/>
    <property type="match status" value="1"/>
</dbReference>
<dbReference type="SUPFAM" id="SSF50331">
    <property type="entry name" value="MOP-like"/>
    <property type="match status" value="1"/>
</dbReference>
<dbReference type="SUPFAM" id="SSF52540">
    <property type="entry name" value="P-loop containing nucleoside triphosphate hydrolases"/>
    <property type="match status" value="1"/>
</dbReference>
<dbReference type="PROSITE" id="PS00211">
    <property type="entry name" value="ABC_TRANSPORTER_1"/>
    <property type="match status" value="1"/>
</dbReference>
<dbReference type="PROSITE" id="PS50893">
    <property type="entry name" value="ABC_TRANSPORTER_2"/>
    <property type="match status" value="1"/>
</dbReference>
<dbReference type="PROSITE" id="PS51245">
    <property type="entry name" value="MALK"/>
    <property type="match status" value="1"/>
</dbReference>
<accession>Q0TA26</accession>
<sequence>MASVQLQNVTKAWGEVVVSKDINLDIHEGEFVVFVGPSGCGKSTLLRMIAGLETITSGDLFIGEKRMNDTPPAERGVGMVFQSYALYPHLSVAENMSFGLKLAGAKKEVINQQVNQVAEVLQLAHLLDRKPKALSGGQRQRVAIGRTLVAEPSVFLLDEPLSNLDAALRVQMRIEISRLHKRLGRTMIYVTHDQVEAMTLADKIVVLDAGRVAQVGKPLELYHYPADRFVAGFIGSPKMNFLPVKVTATAIDQVQVELPMPNRQQVWLPVESRDVQVGANMSLGIRPEHLLPSDIADVILEGEVQVVEQLGNETQIHIQIPSIRQNLVYRQNDVVLVEEGATFAIGLPPERCHLFREDGTACRRLHKEPGV</sequence>
<organism>
    <name type="scientific">Escherichia coli O6:K15:H31 (strain 536 / UPEC)</name>
    <dbReference type="NCBI Taxonomy" id="362663"/>
    <lineage>
        <taxon>Bacteria</taxon>
        <taxon>Pseudomonadati</taxon>
        <taxon>Pseudomonadota</taxon>
        <taxon>Gammaproteobacteria</taxon>
        <taxon>Enterobacterales</taxon>
        <taxon>Enterobacteriaceae</taxon>
        <taxon>Escherichia</taxon>
    </lineage>
</organism>
<name>MALK_ECOL5</name>
<protein>
    <recommendedName>
        <fullName evidence="1">Maltose/maltodextrin import ATP-binding protein MalK</fullName>
        <ecNumber evidence="1">7.5.2.1</ecNumber>
    </recommendedName>
</protein>
<evidence type="ECO:0000255" key="1">
    <source>
        <dbReference type="HAMAP-Rule" id="MF_01709"/>
    </source>
</evidence>
<reference key="1">
    <citation type="journal article" date="2006" name="Mol. Microbiol.">
        <title>Role of pathogenicity island-associated integrases in the genome plasticity of uropathogenic Escherichia coli strain 536.</title>
        <authorList>
            <person name="Hochhut B."/>
            <person name="Wilde C."/>
            <person name="Balling G."/>
            <person name="Middendorf B."/>
            <person name="Dobrindt U."/>
            <person name="Brzuszkiewicz E."/>
            <person name="Gottschalk G."/>
            <person name="Carniel E."/>
            <person name="Hacker J."/>
        </authorList>
    </citation>
    <scope>NUCLEOTIDE SEQUENCE [LARGE SCALE GENOMIC DNA]</scope>
    <source>
        <strain>536 / UPEC</strain>
    </source>
</reference>
<feature type="chain" id="PRO_0000273994" description="Maltose/maltodextrin import ATP-binding protein MalK">
    <location>
        <begin position="1"/>
        <end position="371"/>
    </location>
</feature>
<feature type="domain" description="ABC transporter" evidence="1">
    <location>
        <begin position="4"/>
        <end position="234"/>
    </location>
</feature>
<feature type="binding site" evidence="1">
    <location>
        <begin position="36"/>
        <end position="43"/>
    </location>
    <ligand>
        <name>ATP</name>
        <dbReference type="ChEBI" id="CHEBI:30616"/>
    </ligand>
</feature>